<name>RNC_WOLPP</name>
<keyword id="KW-0963">Cytoplasm</keyword>
<keyword id="KW-0255">Endonuclease</keyword>
<keyword id="KW-0378">Hydrolase</keyword>
<keyword id="KW-0460">Magnesium</keyword>
<keyword id="KW-0479">Metal-binding</keyword>
<keyword id="KW-0507">mRNA processing</keyword>
<keyword id="KW-0540">Nuclease</keyword>
<keyword id="KW-0694">RNA-binding</keyword>
<keyword id="KW-0698">rRNA processing</keyword>
<keyword id="KW-0699">rRNA-binding</keyword>
<keyword id="KW-0819">tRNA processing</keyword>
<gene>
    <name evidence="1" type="primary">rnc</name>
    <name type="ordered locus">WP1084</name>
</gene>
<evidence type="ECO:0000255" key="1">
    <source>
        <dbReference type="HAMAP-Rule" id="MF_00104"/>
    </source>
</evidence>
<feature type="chain" id="PRO_1000094141" description="Ribonuclease 3">
    <location>
        <begin position="1"/>
        <end position="230"/>
    </location>
</feature>
<feature type="domain" description="RNase III" evidence="1">
    <location>
        <begin position="5"/>
        <end position="134"/>
    </location>
</feature>
<feature type="domain" description="DRBM" evidence="1">
    <location>
        <begin position="159"/>
        <end position="228"/>
    </location>
</feature>
<feature type="active site" evidence="1">
    <location>
        <position position="51"/>
    </location>
</feature>
<feature type="active site" evidence="1">
    <location>
        <position position="123"/>
    </location>
</feature>
<feature type="binding site" evidence="1">
    <location>
        <position position="47"/>
    </location>
    <ligand>
        <name>Mg(2+)</name>
        <dbReference type="ChEBI" id="CHEBI:18420"/>
    </ligand>
</feature>
<feature type="binding site" evidence="1">
    <location>
        <position position="120"/>
    </location>
    <ligand>
        <name>Mg(2+)</name>
        <dbReference type="ChEBI" id="CHEBI:18420"/>
    </ligand>
</feature>
<feature type="binding site" evidence="1">
    <location>
        <position position="123"/>
    </location>
    <ligand>
        <name>Mg(2+)</name>
        <dbReference type="ChEBI" id="CHEBI:18420"/>
    </ligand>
</feature>
<protein>
    <recommendedName>
        <fullName evidence="1">Ribonuclease 3</fullName>
        <ecNumber evidence="1">3.1.26.3</ecNumber>
    </recommendedName>
    <alternativeName>
        <fullName evidence="1">Ribonuclease III</fullName>
        <shortName evidence="1">RNase III</shortName>
    </alternativeName>
</protein>
<reference key="1">
    <citation type="journal article" date="2008" name="Mol. Biol. Evol.">
        <title>Genome evolution of Wolbachia strain wPip from the Culex pipiens group.</title>
        <authorList>
            <person name="Klasson L."/>
            <person name="Walker T."/>
            <person name="Sebaihia M."/>
            <person name="Sanders M.J."/>
            <person name="Quail M.A."/>
            <person name="Lord A."/>
            <person name="Sanders S."/>
            <person name="Earl J."/>
            <person name="O'Neill S.L."/>
            <person name="Thomson N."/>
            <person name="Sinkins S.P."/>
            <person name="Parkhill J."/>
        </authorList>
    </citation>
    <scope>NUCLEOTIDE SEQUENCE [LARGE SCALE GENOMIC DNA]</scope>
    <source>
        <strain>wPip</strain>
    </source>
</reference>
<sequence>MRVLNDTISKVINYKFTDYAILEEALTHPSVNKRNSEDQVVSYERLEFLGDSVLNMVVSVMLFKMFPEEKEGALAKRKTDLVCGSTIANVAKEIELGNFIIMNNSERCNGGKCNLKNLENSLEALIGAIYIDGGLESVEKFIIRHWEKLAKDILDPPQDPKTSLQEWTQRNKLPLPKYELVKQTGPAHNPEFTISVCIESYDKVSACAPSKKIAEQKAAELILEKIKKTT</sequence>
<organism>
    <name type="scientific">Wolbachia pipientis subsp. Culex pipiens (strain wPip)</name>
    <dbReference type="NCBI Taxonomy" id="570417"/>
    <lineage>
        <taxon>Bacteria</taxon>
        <taxon>Pseudomonadati</taxon>
        <taxon>Pseudomonadota</taxon>
        <taxon>Alphaproteobacteria</taxon>
        <taxon>Rickettsiales</taxon>
        <taxon>Anaplasmataceae</taxon>
        <taxon>Wolbachieae</taxon>
        <taxon>Wolbachia</taxon>
    </lineage>
</organism>
<dbReference type="EC" id="3.1.26.3" evidence="1"/>
<dbReference type="EMBL" id="AM999887">
    <property type="protein sequence ID" value="CAQ55192.1"/>
    <property type="molecule type" value="Genomic_DNA"/>
</dbReference>
<dbReference type="RefSeq" id="WP_012481989.1">
    <property type="nucleotide sequence ID" value="NC_010981.1"/>
</dbReference>
<dbReference type="SMR" id="B3CMS0"/>
<dbReference type="KEGG" id="wpi:WP1084"/>
<dbReference type="eggNOG" id="COG0571">
    <property type="taxonomic scope" value="Bacteria"/>
</dbReference>
<dbReference type="HOGENOM" id="CLU_000907_1_1_5"/>
<dbReference type="Proteomes" id="UP000008814">
    <property type="component" value="Chromosome"/>
</dbReference>
<dbReference type="GO" id="GO:0005737">
    <property type="term" value="C:cytoplasm"/>
    <property type="evidence" value="ECO:0007669"/>
    <property type="project" value="UniProtKB-SubCell"/>
</dbReference>
<dbReference type="GO" id="GO:0003725">
    <property type="term" value="F:double-stranded RNA binding"/>
    <property type="evidence" value="ECO:0007669"/>
    <property type="project" value="TreeGrafter"/>
</dbReference>
<dbReference type="GO" id="GO:0046872">
    <property type="term" value="F:metal ion binding"/>
    <property type="evidence" value="ECO:0007669"/>
    <property type="project" value="UniProtKB-KW"/>
</dbReference>
<dbReference type="GO" id="GO:0004525">
    <property type="term" value="F:ribonuclease III activity"/>
    <property type="evidence" value="ECO:0007669"/>
    <property type="project" value="UniProtKB-UniRule"/>
</dbReference>
<dbReference type="GO" id="GO:0019843">
    <property type="term" value="F:rRNA binding"/>
    <property type="evidence" value="ECO:0007669"/>
    <property type="project" value="UniProtKB-KW"/>
</dbReference>
<dbReference type="GO" id="GO:0006397">
    <property type="term" value="P:mRNA processing"/>
    <property type="evidence" value="ECO:0007669"/>
    <property type="project" value="UniProtKB-UniRule"/>
</dbReference>
<dbReference type="GO" id="GO:0010468">
    <property type="term" value="P:regulation of gene expression"/>
    <property type="evidence" value="ECO:0007669"/>
    <property type="project" value="TreeGrafter"/>
</dbReference>
<dbReference type="GO" id="GO:0006364">
    <property type="term" value="P:rRNA processing"/>
    <property type="evidence" value="ECO:0007669"/>
    <property type="project" value="UniProtKB-UniRule"/>
</dbReference>
<dbReference type="GO" id="GO:0008033">
    <property type="term" value="P:tRNA processing"/>
    <property type="evidence" value="ECO:0007669"/>
    <property type="project" value="UniProtKB-KW"/>
</dbReference>
<dbReference type="CDD" id="cd10845">
    <property type="entry name" value="DSRM_RNAse_III_family"/>
    <property type="match status" value="1"/>
</dbReference>
<dbReference type="CDD" id="cd00593">
    <property type="entry name" value="RIBOc"/>
    <property type="match status" value="1"/>
</dbReference>
<dbReference type="FunFam" id="1.10.1520.10:FF:000001">
    <property type="entry name" value="Ribonuclease 3"/>
    <property type="match status" value="1"/>
</dbReference>
<dbReference type="FunFam" id="3.30.160.20:FF:000003">
    <property type="entry name" value="Ribonuclease 3"/>
    <property type="match status" value="1"/>
</dbReference>
<dbReference type="Gene3D" id="3.30.160.20">
    <property type="match status" value="1"/>
</dbReference>
<dbReference type="Gene3D" id="1.10.1520.10">
    <property type="entry name" value="Ribonuclease III domain"/>
    <property type="match status" value="1"/>
</dbReference>
<dbReference type="HAMAP" id="MF_00104">
    <property type="entry name" value="RNase_III"/>
    <property type="match status" value="1"/>
</dbReference>
<dbReference type="InterPro" id="IPR014720">
    <property type="entry name" value="dsRBD_dom"/>
</dbReference>
<dbReference type="InterPro" id="IPR011907">
    <property type="entry name" value="RNase_III"/>
</dbReference>
<dbReference type="InterPro" id="IPR000999">
    <property type="entry name" value="RNase_III_dom"/>
</dbReference>
<dbReference type="InterPro" id="IPR036389">
    <property type="entry name" value="RNase_III_sf"/>
</dbReference>
<dbReference type="NCBIfam" id="TIGR02191">
    <property type="entry name" value="RNaseIII"/>
    <property type="match status" value="1"/>
</dbReference>
<dbReference type="PANTHER" id="PTHR11207:SF0">
    <property type="entry name" value="RIBONUCLEASE 3"/>
    <property type="match status" value="1"/>
</dbReference>
<dbReference type="PANTHER" id="PTHR11207">
    <property type="entry name" value="RIBONUCLEASE III"/>
    <property type="match status" value="1"/>
</dbReference>
<dbReference type="Pfam" id="PF00035">
    <property type="entry name" value="dsrm"/>
    <property type="match status" value="1"/>
</dbReference>
<dbReference type="Pfam" id="PF14622">
    <property type="entry name" value="Ribonucleas_3_3"/>
    <property type="match status" value="1"/>
</dbReference>
<dbReference type="SMART" id="SM00358">
    <property type="entry name" value="DSRM"/>
    <property type="match status" value="1"/>
</dbReference>
<dbReference type="SMART" id="SM00535">
    <property type="entry name" value="RIBOc"/>
    <property type="match status" value="1"/>
</dbReference>
<dbReference type="SUPFAM" id="SSF54768">
    <property type="entry name" value="dsRNA-binding domain-like"/>
    <property type="match status" value="1"/>
</dbReference>
<dbReference type="SUPFAM" id="SSF69065">
    <property type="entry name" value="RNase III domain-like"/>
    <property type="match status" value="1"/>
</dbReference>
<dbReference type="PROSITE" id="PS50137">
    <property type="entry name" value="DS_RBD"/>
    <property type="match status" value="1"/>
</dbReference>
<dbReference type="PROSITE" id="PS00517">
    <property type="entry name" value="RNASE_3_1"/>
    <property type="match status" value="1"/>
</dbReference>
<dbReference type="PROSITE" id="PS50142">
    <property type="entry name" value="RNASE_3_2"/>
    <property type="match status" value="1"/>
</dbReference>
<accession>B3CMS0</accession>
<proteinExistence type="inferred from homology"/>
<comment type="function">
    <text evidence="1">Digests double-stranded RNA. Involved in the processing of primary rRNA transcript to yield the immediate precursors to the large and small rRNAs (23S and 16S). Processes some mRNAs, and tRNAs when they are encoded in the rRNA operon. Processes pre-crRNA and tracrRNA of type II CRISPR loci if present in the organism.</text>
</comment>
<comment type="catalytic activity">
    <reaction evidence="1">
        <text>Endonucleolytic cleavage to 5'-phosphomonoester.</text>
        <dbReference type="EC" id="3.1.26.3"/>
    </reaction>
</comment>
<comment type="cofactor">
    <cofactor evidence="1">
        <name>Mg(2+)</name>
        <dbReference type="ChEBI" id="CHEBI:18420"/>
    </cofactor>
</comment>
<comment type="subunit">
    <text evidence="1">Homodimer.</text>
</comment>
<comment type="subcellular location">
    <subcellularLocation>
        <location evidence="1">Cytoplasm</location>
    </subcellularLocation>
</comment>
<comment type="similarity">
    <text evidence="1">Belongs to the ribonuclease III family.</text>
</comment>